<keyword id="KW-0030">Aminoacyl-tRNA synthetase</keyword>
<keyword id="KW-0067">ATP-binding</keyword>
<keyword id="KW-0963">Cytoplasm</keyword>
<keyword id="KW-0436">Ligase</keyword>
<keyword id="KW-0547">Nucleotide-binding</keyword>
<keyword id="KW-0648">Protein biosynthesis</keyword>
<evidence type="ECO:0000255" key="1">
    <source>
        <dbReference type="HAMAP-Rule" id="MF_01571"/>
    </source>
</evidence>
<sequence length="480" mass="54919">MPKEVITQRSVDYNQWYLDIVREADLAEVAEVVRGCIVVKAHGWAIWELMQRALDDRIKATGHANVQFPLLIPKSFIMKEAEHVEGFAPEVAEVTRAGGEELAEPYVIRPTSETIIGYFYSKWIRSYRDLPLLYNQWANVMRWEMRTRPFLRTAEFWWQEGHTAHATEAEAEEETLRILHEVYADFVEKEMAVPVIRGLKTEKEKFPGALRSYCIEAMMQDGRALQAGTSHNLGQNFARAFDITFTDQHNTIQYAWTTSWGVSTRLIGALIMTHSDDEGLVLPPRLAPIQVVVVPIYKNDEERSAVMEAVNRMTAAWKGRLRFKVDDRDTYSPGYKFNEWELKGVPVRIEIGPKDVAKETVALARRDMPGKAGKSFVPQAGLTERIEALLAEMQTGLFQRALAFREARTADVTTYDELKEQIERGFARAYWAGSTADEKRIQEETRATIRCIPLEQPGTVGRCVYTGRETDRQVIFARAY</sequence>
<organism>
    <name type="scientific">Chloroflexus aggregans (strain MD-66 / DSM 9485)</name>
    <dbReference type="NCBI Taxonomy" id="326427"/>
    <lineage>
        <taxon>Bacteria</taxon>
        <taxon>Bacillati</taxon>
        <taxon>Chloroflexota</taxon>
        <taxon>Chloroflexia</taxon>
        <taxon>Chloroflexales</taxon>
        <taxon>Chloroflexineae</taxon>
        <taxon>Chloroflexaceae</taxon>
        <taxon>Chloroflexus</taxon>
    </lineage>
</organism>
<protein>
    <recommendedName>
        <fullName evidence="1">Proline--tRNA ligase</fullName>
        <ecNumber evidence="1">6.1.1.15</ecNumber>
    </recommendedName>
    <alternativeName>
        <fullName evidence="1">Prolyl-tRNA synthetase</fullName>
        <shortName evidence="1">ProRS</shortName>
    </alternativeName>
</protein>
<comment type="function">
    <text evidence="1">Catalyzes the attachment of proline to tRNA(Pro) in a two-step reaction: proline is first activated by ATP to form Pro-AMP and then transferred to the acceptor end of tRNA(Pro).</text>
</comment>
<comment type="catalytic activity">
    <reaction evidence="1">
        <text>tRNA(Pro) + L-proline + ATP = L-prolyl-tRNA(Pro) + AMP + diphosphate</text>
        <dbReference type="Rhea" id="RHEA:14305"/>
        <dbReference type="Rhea" id="RHEA-COMP:9700"/>
        <dbReference type="Rhea" id="RHEA-COMP:9702"/>
        <dbReference type="ChEBI" id="CHEBI:30616"/>
        <dbReference type="ChEBI" id="CHEBI:33019"/>
        <dbReference type="ChEBI" id="CHEBI:60039"/>
        <dbReference type="ChEBI" id="CHEBI:78442"/>
        <dbReference type="ChEBI" id="CHEBI:78532"/>
        <dbReference type="ChEBI" id="CHEBI:456215"/>
        <dbReference type="EC" id="6.1.1.15"/>
    </reaction>
</comment>
<comment type="subunit">
    <text evidence="1">Homodimer.</text>
</comment>
<comment type="subcellular location">
    <subcellularLocation>
        <location evidence="1">Cytoplasm</location>
    </subcellularLocation>
</comment>
<comment type="domain">
    <text evidence="1">Consists of three domains: the N-terminal catalytic domain, the anticodon-binding domain and the C-terminal extension.</text>
</comment>
<comment type="similarity">
    <text evidence="1">Belongs to the class-II aminoacyl-tRNA synthetase family. ProS type 3 subfamily.</text>
</comment>
<accession>B8G3V5</accession>
<gene>
    <name evidence="1" type="primary">proS</name>
    <name type="ordered locus">Cagg_2485</name>
</gene>
<reference key="1">
    <citation type="submission" date="2008-12" db="EMBL/GenBank/DDBJ databases">
        <title>Complete sequence of Chloroflexus aggregans DSM 9485.</title>
        <authorList>
            <consortium name="US DOE Joint Genome Institute"/>
            <person name="Lucas S."/>
            <person name="Copeland A."/>
            <person name="Lapidus A."/>
            <person name="Glavina del Rio T."/>
            <person name="Dalin E."/>
            <person name="Tice H."/>
            <person name="Pitluck S."/>
            <person name="Foster B."/>
            <person name="Larimer F."/>
            <person name="Land M."/>
            <person name="Hauser L."/>
            <person name="Kyrpides N."/>
            <person name="Mikhailova N."/>
            <person name="Bryant D.A."/>
            <person name="Richardson P."/>
        </authorList>
    </citation>
    <scope>NUCLEOTIDE SEQUENCE [LARGE SCALE GENOMIC DNA]</scope>
    <source>
        <strain>MD-66 / DSM 9485</strain>
    </source>
</reference>
<name>SYP_CHLAD</name>
<feature type="chain" id="PRO_1000215549" description="Proline--tRNA ligase">
    <location>
        <begin position="1"/>
        <end position="480"/>
    </location>
</feature>
<proteinExistence type="inferred from homology"/>
<dbReference type="EC" id="6.1.1.15" evidence="1"/>
<dbReference type="EMBL" id="CP001337">
    <property type="protein sequence ID" value="ACL25357.1"/>
    <property type="molecule type" value="Genomic_DNA"/>
</dbReference>
<dbReference type="RefSeq" id="WP_015941215.1">
    <property type="nucleotide sequence ID" value="NC_011831.1"/>
</dbReference>
<dbReference type="SMR" id="B8G3V5"/>
<dbReference type="STRING" id="326427.Cagg_2485"/>
<dbReference type="KEGG" id="cag:Cagg_2485"/>
<dbReference type="eggNOG" id="COG0442">
    <property type="taxonomic scope" value="Bacteria"/>
</dbReference>
<dbReference type="HOGENOM" id="CLU_001882_4_2_0"/>
<dbReference type="OrthoDB" id="9809052at2"/>
<dbReference type="Proteomes" id="UP000002508">
    <property type="component" value="Chromosome"/>
</dbReference>
<dbReference type="GO" id="GO:0017101">
    <property type="term" value="C:aminoacyl-tRNA synthetase multienzyme complex"/>
    <property type="evidence" value="ECO:0007669"/>
    <property type="project" value="TreeGrafter"/>
</dbReference>
<dbReference type="GO" id="GO:0005737">
    <property type="term" value="C:cytoplasm"/>
    <property type="evidence" value="ECO:0007669"/>
    <property type="project" value="UniProtKB-SubCell"/>
</dbReference>
<dbReference type="GO" id="GO:0005524">
    <property type="term" value="F:ATP binding"/>
    <property type="evidence" value="ECO:0007669"/>
    <property type="project" value="UniProtKB-UniRule"/>
</dbReference>
<dbReference type="GO" id="GO:0004827">
    <property type="term" value="F:proline-tRNA ligase activity"/>
    <property type="evidence" value="ECO:0007669"/>
    <property type="project" value="UniProtKB-UniRule"/>
</dbReference>
<dbReference type="GO" id="GO:0006433">
    <property type="term" value="P:prolyl-tRNA aminoacylation"/>
    <property type="evidence" value="ECO:0007669"/>
    <property type="project" value="UniProtKB-UniRule"/>
</dbReference>
<dbReference type="CDD" id="cd00862">
    <property type="entry name" value="ProRS_anticodon_zinc"/>
    <property type="match status" value="1"/>
</dbReference>
<dbReference type="CDD" id="cd00778">
    <property type="entry name" value="ProRS_core_arch_euk"/>
    <property type="match status" value="1"/>
</dbReference>
<dbReference type="FunFam" id="3.40.50.800:FF:000005">
    <property type="entry name" value="bifunctional glutamate/proline--tRNA ligase"/>
    <property type="match status" value="1"/>
</dbReference>
<dbReference type="FunFam" id="3.30.930.10:FF:000023">
    <property type="entry name" value="Proline--tRNA ligase"/>
    <property type="match status" value="1"/>
</dbReference>
<dbReference type="Gene3D" id="3.40.50.800">
    <property type="entry name" value="Anticodon-binding domain"/>
    <property type="match status" value="1"/>
</dbReference>
<dbReference type="Gene3D" id="3.30.930.10">
    <property type="entry name" value="Bira Bifunctional Protein, Domain 2"/>
    <property type="match status" value="1"/>
</dbReference>
<dbReference type="Gene3D" id="3.30.110.30">
    <property type="entry name" value="C-terminal domain of ProRS"/>
    <property type="match status" value="1"/>
</dbReference>
<dbReference type="HAMAP" id="MF_01571">
    <property type="entry name" value="Pro_tRNA_synth_type3"/>
    <property type="match status" value="1"/>
</dbReference>
<dbReference type="InterPro" id="IPR002314">
    <property type="entry name" value="aa-tRNA-synt_IIb"/>
</dbReference>
<dbReference type="InterPro" id="IPR006195">
    <property type="entry name" value="aa-tRNA-synth_II"/>
</dbReference>
<dbReference type="InterPro" id="IPR045864">
    <property type="entry name" value="aa-tRNA-synth_II/BPL/LPL"/>
</dbReference>
<dbReference type="InterPro" id="IPR004154">
    <property type="entry name" value="Anticodon-bd"/>
</dbReference>
<dbReference type="InterPro" id="IPR036621">
    <property type="entry name" value="Anticodon-bd_dom_sf"/>
</dbReference>
<dbReference type="InterPro" id="IPR002316">
    <property type="entry name" value="Pro-tRNA-ligase_IIa"/>
</dbReference>
<dbReference type="InterPro" id="IPR004499">
    <property type="entry name" value="Pro-tRNA-ligase_IIa_arc-type"/>
</dbReference>
<dbReference type="InterPro" id="IPR016061">
    <property type="entry name" value="Pro-tRNA_ligase_II_C"/>
</dbReference>
<dbReference type="InterPro" id="IPR017449">
    <property type="entry name" value="Pro-tRNA_synth_II"/>
</dbReference>
<dbReference type="InterPro" id="IPR033721">
    <property type="entry name" value="ProRS_core_arch_euk"/>
</dbReference>
<dbReference type="NCBIfam" id="TIGR00408">
    <property type="entry name" value="proS_fam_I"/>
    <property type="match status" value="1"/>
</dbReference>
<dbReference type="PANTHER" id="PTHR43382:SF2">
    <property type="entry name" value="BIFUNCTIONAL GLUTAMATE_PROLINE--TRNA LIGASE"/>
    <property type="match status" value="1"/>
</dbReference>
<dbReference type="PANTHER" id="PTHR43382">
    <property type="entry name" value="PROLYL-TRNA SYNTHETASE"/>
    <property type="match status" value="1"/>
</dbReference>
<dbReference type="Pfam" id="PF03129">
    <property type="entry name" value="HGTP_anticodon"/>
    <property type="match status" value="1"/>
</dbReference>
<dbReference type="Pfam" id="PF09180">
    <property type="entry name" value="ProRS-C_1"/>
    <property type="match status" value="1"/>
</dbReference>
<dbReference type="Pfam" id="PF00587">
    <property type="entry name" value="tRNA-synt_2b"/>
    <property type="match status" value="1"/>
</dbReference>
<dbReference type="PRINTS" id="PR01046">
    <property type="entry name" value="TRNASYNTHPRO"/>
</dbReference>
<dbReference type="SMART" id="SM00946">
    <property type="entry name" value="ProRS-C_1"/>
    <property type="match status" value="1"/>
</dbReference>
<dbReference type="SUPFAM" id="SSF64586">
    <property type="entry name" value="C-terminal domain of ProRS"/>
    <property type="match status" value="1"/>
</dbReference>
<dbReference type="SUPFAM" id="SSF52954">
    <property type="entry name" value="Class II aaRS ABD-related"/>
    <property type="match status" value="1"/>
</dbReference>
<dbReference type="SUPFAM" id="SSF55681">
    <property type="entry name" value="Class II aaRS and biotin synthetases"/>
    <property type="match status" value="1"/>
</dbReference>
<dbReference type="PROSITE" id="PS50862">
    <property type="entry name" value="AA_TRNA_LIGASE_II"/>
    <property type="match status" value="1"/>
</dbReference>